<name>PCKA_SHOC1</name>
<gene>
    <name evidence="1" type="primary">pckA</name>
    <name type="ordered locus">ABC2879</name>
</gene>
<protein>
    <recommendedName>
        <fullName evidence="1">Phosphoenolpyruvate carboxykinase (ATP)</fullName>
        <shortName evidence="1">PCK</shortName>
        <shortName evidence="1">PEP carboxykinase</shortName>
        <shortName evidence="1">PEPCK</shortName>
        <ecNumber evidence="1">4.1.1.49</ecNumber>
    </recommendedName>
</protein>
<accession>Q5WDZ7</accession>
<proteinExistence type="inferred from homology"/>
<comment type="function">
    <text evidence="1">Involved in the gluconeogenesis. Catalyzes the conversion of oxaloacetate (OAA) to phosphoenolpyruvate (PEP) through direct phosphoryl transfer between the nucleoside triphosphate and OAA.</text>
</comment>
<comment type="catalytic activity">
    <reaction evidence="1">
        <text>oxaloacetate + ATP = phosphoenolpyruvate + ADP + CO2</text>
        <dbReference type="Rhea" id="RHEA:18617"/>
        <dbReference type="ChEBI" id="CHEBI:16452"/>
        <dbReference type="ChEBI" id="CHEBI:16526"/>
        <dbReference type="ChEBI" id="CHEBI:30616"/>
        <dbReference type="ChEBI" id="CHEBI:58702"/>
        <dbReference type="ChEBI" id="CHEBI:456216"/>
        <dbReference type="EC" id="4.1.1.49"/>
    </reaction>
</comment>
<comment type="cofactor">
    <cofactor evidence="1">
        <name>Mn(2+)</name>
        <dbReference type="ChEBI" id="CHEBI:29035"/>
    </cofactor>
    <text evidence="1">Binds 1 Mn(2+) ion per subunit.</text>
</comment>
<comment type="pathway">
    <text evidence="1">Carbohydrate biosynthesis; gluconeogenesis.</text>
</comment>
<comment type="subcellular location">
    <subcellularLocation>
        <location evidence="1">Cytoplasm</location>
    </subcellularLocation>
</comment>
<comment type="similarity">
    <text evidence="1">Belongs to the phosphoenolpyruvate carboxykinase (ATP) family.</text>
</comment>
<keyword id="KW-0067">ATP-binding</keyword>
<keyword id="KW-0963">Cytoplasm</keyword>
<keyword id="KW-0210">Decarboxylase</keyword>
<keyword id="KW-0312">Gluconeogenesis</keyword>
<keyword id="KW-0456">Lyase</keyword>
<keyword id="KW-0464">Manganese</keyword>
<keyword id="KW-0479">Metal-binding</keyword>
<keyword id="KW-0547">Nucleotide-binding</keyword>
<keyword id="KW-1185">Reference proteome</keyword>
<reference key="1">
    <citation type="submission" date="2003-10" db="EMBL/GenBank/DDBJ databases">
        <title>The complete genome sequence of the alkaliphilic Bacillus clausii KSM-K16.</title>
        <authorList>
            <person name="Takaki Y."/>
            <person name="Kageyama Y."/>
            <person name="Shimamura S."/>
            <person name="Suzuki H."/>
            <person name="Nishi S."/>
            <person name="Hatada Y."/>
            <person name="Kawai S."/>
            <person name="Ito S."/>
            <person name="Horikoshi K."/>
        </authorList>
    </citation>
    <scope>NUCLEOTIDE SEQUENCE [LARGE SCALE GENOMIC DNA]</scope>
    <source>
        <strain>KSM-K16</strain>
    </source>
</reference>
<evidence type="ECO:0000255" key="1">
    <source>
        <dbReference type="HAMAP-Rule" id="MF_00453"/>
    </source>
</evidence>
<sequence length="527" mass="57668">MKMLHRSALLEQLLSSPKTLHQLPASTLVEHALQRNEGILTDSGALAVKTGLYTGRSPQDKFIVDEPMSRDSIHWGATNKPISSEVFTRLKDKVLHYLQQKEVRYASVGFAGADPSFQLPITYLNEFAWHHLFARQLFIREQAPSNNGLEPFTIISAPTFKADPSVDGTRSEAFVIISFEQRIILIGGTEYAGEMKKAIFSVMNYLLPEAGVLPMHCSANTTDEGETALFFGLSGTGKTTLSASEHRRLIGDDEHGWSEKGIFNIEGGCYAKCIGLSKESEPQIWDAIAFGAVLENVVVDPNTGKPDFKSGELTENTRAAYPLEAIPNALLPSVAGPPKAIIFLTADAFGVLPPISKLTKEQAMYHFLSGYTSKLAGTERGITQPEATFSTCFGAPFLPRKPEEYATMLGDKLENDDVQVFLVNTGWTGGSYGTGTRIKLAYTRAMVEAALQGKLDEIETVCDPIFGLYVPTHCPGVPDELLTPRRVWKDEAAYEATALQLAKQFHENFSAFPAAKDSVRLAGPRLA</sequence>
<feature type="chain" id="PRO_0000203809" description="Phosphoenolpyruvate carboxykinase (ATP)">
    <location>
        <begin position="1"/>
        <end position="527"/>
    </location>
</feature>
<feature type="binding site" evidence="1">
    <location>
        <position position="56"/>
    </location>
    <ligand>
        <name>substrate</name>
    </ligand>
</feature>
<feature type="binding site" evidence="1">
    <location>
        <position position="191"/>
    </location>
    <ligand>
        <name>substrate</name>
    </ligand>
</feature>
<feature type="binding site" evidence="1">
    <location>
        <position position="197"/>
    </location>
    <ligand>
        <name>ATP</name>
        <dbReference type="ChEBI" id="CHEBI:30616"/>
    </ligand>
</feature>
<feature type="binding site" evidence="1">
    <location>
        <position position="197"/>
    </location>
    <ligand>
        <name>Mn(2+)</name>
        <dbReference type="ChEBI" id="CHEBI:29035"/>
    </ligand>
</feature>
<feature type="binding site" evidence="1">
    <location>
        <position position="197"/>
    </location>
    <ligand>
        <name>substrate</name>
    </ligand>
</feature>
<feature type="binding site" evidence="1">
    <location>
        <position position="216"/>
    </location>
    <ligand>
        <name>ATP</name>
        <dbReference type="ChEBI" id="CHEBI:30616"/>
    </ligand>
</feature>
<feature type="binding site" evidence="1">
    <location>
        <position position="216"/>
    </location>
    <ligand>
        <name>Mn(2+)</name>
        <dbReference type="ChEBI" id="CHEBI:29035"/>
    </ligand>
</feature>
<feature type="binding site" evidence="1">
    <location>
        <begin position="232"/>
        <end position="240"/>
    </location>
    <ligand>
        <name>ATP</name>
        <dbReference type="ChEBI" id="CHEBI:30616"/>
    </ligand>
</feature>
<feature type="binding site" evidence="1">
    <location>
        <position position="253"/>
    </location>
    <ligand>
        <name>Mn(2+)</name>
        <dbReference type="ChEBI" id="CHEBI:29035"/>
    </ligand>
</feature>
<feature type="binding site" evidence="1">
    <location>
        <position position="281"/>
    </location>
    <ligand>
        <name>ATP</name>
        <dbReference type="ChEBI" id="CHEBI:30616"/>
    </ligand>
</feature>
<feature type="binding site" evidence="1">
    <location>
        <position position="318"/>
    </location>
    <ligand>
        <name>ATP</name>
        <dbReference type="ChEBI" id="CHEBI:30616"/>
    </ligand>
</feature>
<feature type="binding site" evidence="1">
    <location>
        <position position="318"/>
    </location>
    <ligand>
        <name>substrate</name>
    </ligand>
</feature>
<feature type="binding site" evidence="1">
    <location>
        <begin position="437"/>
        <end position="438"/>
    </location>
    <ligand>
        <name>ATP</name>
        <dbReference type="ChEBI" id="CHEBI:30616"/>
    </ligand>
</feature>
<feature type="binding site" evidence="1">
    <location>
        <position position="443"/>
    </location>
    <ligand>
        <name>ATP</name>
        <dbReference type="ChEBI" id="CHEBI:30616"/>
    </ligand>
</feature>
<organism>
    <name type="scientific">Shouchella clausii (strain KSM-K16)</name>
    <name type="common">Alkalihalobacillus clausii</name>
    <dbReference type="NCBI Taxonomy" id="66692"/>
    <lineage>
        <taxon>Bacteria</taxon>
        <taxon>Bacillati</taxon>
        <taxon>Bacillota</taxon>
        <taxon>Bacilli</taxon>
        <taxon>Bacillales</taxon>
        <taxon>Bacillaceae</taxon>
        <taxon>Shouchella</taxon>
    </lineage>
</organism>
<dbReference type="EC" id="4.1.1.49" evidence="1"/>
<dbReference type="EMBL" id="AP006627">
    <property type="protein sequence ID" value="BAD65413.1"/>
    <property type="molecule type" value="Genomic_DNA"/>
</dbReference>
<dbReference type="RefSeq" id="WP_011247721.1">
    <property type="nucleotide sequence ID" value="NC_006582.1"/>
</dbReference>
<dbReference type="SMR" id="Q5WDZ7"/>
<dbReference type="STRING" id="66692.ABC2879"/>
<dbReference type="KEGG" id="bcl:ABC2879"/>
<dbReference type="eggNOG" id="COG1866">
    <property type="taxonomic scope" value="Bacteria"/>
</dbReference>
<dbReference type="HOGENOM" id="CLU_018247_0_1_9"/>
<dbReference type="OrthoDB" id="9806325at2"/>
<dbReference type="UniPathway" id="UPA00138"/>
<dbReference type="Proteomes" id="UP000001168">
    <property type="component" value="Chromosome"/>
</dbReference>
<dbReference type="GO" id="GO:0005829">
    <property type="term" value="C:cytosol"/>
    <property type="evidence" value="ECO:0007669"/>
    <property type="project" value="TreeGrafter"/>
</dbReference>
<dbReference type="GO" id="GO:0005524">
    <property type="term" value="F:ATP binding"/>
    <property type="evidence" value="ECO:0007669"/>
    <property type="project" value="UniProtKB-UniRule"/>
</dbReference>
<dbReference type="GO" id="GO:0046872">
    <property type="term" value="F:metal ion binding"/>
    <property type="evidence" value="ECO:0007669"/>
    <property type="project" value="UniProtKB-KW"/>
</dbReference>
<dbReference type="GO" id="GO:0004612">
    <property type="term" value="F:phosphoenolpyruvate carboxykinase (ATP) activity"/>
    <property type="evidence" value="ECO:0007669"/>
    <property type="project" value="UniProtKB-UniRule"/>
</dbReference>
<dbReference type="GO" id="GO:0006094">
    <property type="term" value="P:gluconeogenesis"/>
    <property type="evidence" value="ECO:0007669"/>
    <property type="project" value="UniProtKB-UniRule"/>
</dbReference>
<dbReference type="CDD" id="cd00484">
    <property type="entry name" value="PEPCK_ATP"/>
    <property type="match status" value="1"/>
</dbReference>
<dbReference type="FunFam" id="2.170.8.10:FF:000001">
    <property type="entry name" value="Phosphoenolpyruvate carboxykinase (ATP)"/>
    <property type="match status" value="1"/>
</dbReference>
<dbReference type="Gene3D" id="3.90.228.20">
    <property type="match status" value="1"/>
</dbReference>
<dbReference type="Gene3D" id="3.40.449.10">
    <property type="entry name" value="Phosphoenolpyruvate Carboxykinase, domain 1"/>
    <property type="match status" value="1"/>
</dbReference>
<dbReference type="Gene3D" id="2.170.8.10">
    <property type="entry name" value="Phosphoenolpyruvate Carboxykinase, domain 2"/>
    <property type="match status" value="1"/>
</dbReference>
<dbReference type="HAMAP" id="MF_00453">
    <property type="entry name" value="PEPCK_ATP"/>
    <property type="match status" value="1"/>
</dbReference>
<dbReference type="InterPro" id="IPR001272">
    <property type="entry name" value="PEP_carboxykinase_ATP"/>
</dbReference>
<dbReference type="InterPro" id="IPR013035">
    <property type="entry name" value="PEP_carboxykinase_C"/>
</dbReference>
<dbReference type="InterPro" id="IPR008210">
    <property type="entry name" value="PEP_carboxykinase_N"/>
</dbReference>
<dbReference type="InterPro" id="IPR015994">
    <property type="entry name" value="PEPCK_ATP_CS"/>
</dbReference>
<dbReference type="NCBIfam" id="TIGR00224">
    <property type="entry name" value="pckA"/>
    <property type="match status" value="1"/>
</dbReference>
<dbReference type="NCBIfam" id="NF006820">
    <property type="entry name" value="PRK09344.1-2"/>
    <property type="match status" value="1"/>
</dbReference>
<dbReference type="NCBIfam" id="NF006821">
    <property type="entry name" value="PRK09344.1-3"/>
    <property type="match status" value="1"/>
</dbReference>
<dbReference type="PANTHER" id="PTHR30031:SF0">
    <property type="entry name" value="PHOSPHOENOLPYRUVATE CARBOXYKINASE (ATP)"/>
    <property type="match status" value="1"/>
</dbReference>
<dbReference type="PANTHER" id="PTHR30031">
    <property type="entry name" value="PHOSPHOENOLPYRUVATE CARBOXYKINASE ATP"/>
    <property type="match status" value="1"/>
</dbReference>
<dbReference type="Pfam" id="PF01293">
    <property type="entry name" value="PEPCK_ATP"/>
    <property type="match status" value="1"/>
</dbReference>
<dbReference type="PIRSF" id="PIRSF006294">
    <property type="entry name" value="PEP_crbxkin"/>
    <property type="match status" value="1"/>
</dbReference>
<dbReference type="SUPFAM" id="SSF68923">
    <property type="entry name" value="PEP carboxykinase N-terminal domain"/>
    <property type="match status" value="1"/>
</dbReference>
<dbReference type="SUPFAM" id="SSF53795">
    <property type="entry name" value="PEP carboxykinase-like"/>
    <property type="match status" value="1"/>
</dbReference>
<dbReference type="PROSITE" id="PS00532">
    <property type="entry name" value="PEPCK_ATP"/>
    <property type="match status" value="1"/>
</dbReference>